<dbReference type="EMBL" id="EF115543">
    <property type="protein sequence ID" value="ABK79608.1"/>
    <property type="molecule type" value="Genomic_DNA"/>
</dbReference>
<dbReference type="RefSeq" id="YP_874765.1">
    <property type="nucleotide sequence ID" value="NC_008591.1"/>
</dbReference>
<dbReference type="SMR" id="A1EA37"/>
<dbReference type="GeneID" id="4525010"/>
<dbReference type="GO" id="GO:0009535">
    <property type="term" value="C:chloroplast thylakoid membrane"/>
    <property type="evidence" value="ECO:0007669"/>
    <property type="project" value="UniProtKB-SubCell"/>
</dbReference>
<dbReference type="GO" id="GO:0009523">
    <property type="term" value="C:photosystem II"/>
    <property type="evidence" value="ECO:0007669"/>
    <property type="project" value="UniProtKB-KW"/>
</dbReference>
<dbReference type="GO" id="GO:0042301">
    <property type="term" value="F:phosphate ion binding"/>
    <property type="evidence" value="ECO:0007669"/>
    <property type="project" value="InterPro"/>
</dbReference>
<dbReference type="GO" id="GO:0015979">
    <property type="term" value="P:photosynthesis"/>
    <property type="evidence" value="ECO:0007669"/>
    <property type="project" value="UniProtKB-UniRule"/>
</dbReference>
<dbReference type="GO" id="GO:0050821">
    <property type="term" value="P:protein stabilization"/>
    <property type="evidence" value="ECO:0007669"/>
    <property type="project" value="InterPro"/>
</dbReference>
<dbReference type="FunFam" id="1.20.5.880:FF:000001">
    <property type="entry name" value="Photosystem II reaction center protein H"/>
    <property type="match status" value="1"/>
</dbReference>
<dbReference type="Gene3D" id="1.20.5.880">
    <property type="entry name" value="Photosystem II reaction center protein H"/>
    <property type="match status" value="1"/>
</dbReference>
<dbReference type="HAMAP" id="MF_00752">
    <property type="entry name" value="PSII_PsbH"/>
    <property type="match status" value="1"/>
</dbReference>
<dbReference type="InterPro" id="IPR001056">
    <property type="entry name" value="PSII_PsbH"/>
</dbReference>
<dbReference type="InterPro" id="IPR036863">
    <property type="entry name" value="PSII_PsbH_sf"/>
</dbReference>
<dbReference type="NCBIfam" id="NF002728">
    <property type="entry name" value="PRK02624.1"/>
    <property type="match status" value="1"/>
</dbReference>
<dbReference type="PANTHER" id="PTHR34469">
    <property type="entry name" value="PHOTOSYSTEM II REACTION CENTER PROTEIN H"/>
    <property type="match status" value="1"/>
</dbReference>
<dbReference type="PANTHER" id="PTHR34469:SF4">
    <property type="entry name" value="PHOTOSYSTEM II REACTION CENTER PROTEIN H"/>
    <property type="match status" value="1"/>
</dbReference>
<dbReference type="Pfam" id="PF00737">
    <property type="entry name" value="PsbH"/>
    <property type="match status" value="1"/>
</dbReference>
<dbReference type="SUPFAM" id="SSF161025">
    <property type="entry name" value="Photosystem II 10 kDa phosphoprotein PsbH"/>
    <property type="match status" value="1"/>
</dbReference>
<proteinExistence type="inferred from homology"/>
<keyword id="KW-0150">Chloroplast</keyword>
<keyword id="KW-0472">Membrane</keyword>
<keyword id="KW-0597">Phosphoprotein</keyword>
<keyword id="KW-0602">Photosynthesis</keyword>
<keyword id="KW-0604">Photosystem II</keyword>
<keyword id="KW-0934">Plastid</keyword>
<keyword id="KW-0793">Thylakoid</keyword>
<keyword id="KW-0812">Transmembrane</keyword>
<keyword id="KW-1133">Transmembrane helix</keyword>
<comment type="function">
    <text evidence="2">One of the components of the core complex of photosystem II (PSII), required for its stability and/or assembly. PSII is a light-driven water:plastoquinone oxidoreductase that uses light energy to abstract electrons from H(2)O, generating O(2) and a proton gradient subsequently used for ATP formation. It consists of a core antenna complex that captures photons, and an electron transfer chain that converts photonic excitation into a charge separation.</text>
</comment>
<comment type="subunit">
    <text evidence="2">PSII is composed of 1 copy each of membrane proteins PsbA, PsbB, PsbC, PsbD, PsbE, PsbF, PsbH, PsbI, PsbJ, PsbK, PsbL, PsbM, PsbT, PsbX, PsbY, PsbZ, Psb30/Ycf12, at least 3 peripheral proteins of the oxygen-evolving complex and a large number of cofactors. It forms dimeric complexes.</text>
</comment>
<comment type="subcellular location">
    <subcellularLocation>
        <location evidence="2">Plastid</location>
        <location evidence="2">Chloroplast thylakoid membrane</location>
        <topology evidence="2">Single-pass membrane protein</topology>
    </subcellularLocation>
</comment>
<comment type="PTM">
    <text evidence="2">Phosphorylation is a light-dependent reaction catalyzed by a membrane-bound kinase; phosphorylation occurs on Thr residue(s) in the N-terminus of the protein.</text>
</comment>
<comment type="similarity">
    <text evidence="2">Belongs to the PsbH family.</text>
</comment>
<geneLocation type="chloroplast"/>
<protein>
    <recommendedName>
        <fullName evidence="2">Photosystem II reaction center protein H</fullName>
        <shortName evidence="2">PSII-H</shortName>
    </recommendedName>
    <alternativeName>
        <fullName evidence="2">Photosystem II 10 kDa phosphoprotein</fullName>
    </alternativeName>
</protein>
<gene>
    <name evidence="2" type="primary">psbH</name>
</gene>
<accession>A1EA37</accession>
<sequence>MATQTVEDSSKPRPKRTGAGSLLKPLNSEYGKVAPGWGTTPFMGVAMALFAIFLSIILEIYNSSVLLDGILTN</sequence>
<feature type="initiator methionine" description="Removed" evidence="1">
    <location>
        <position position="1"/>
    </location>
</feature>
<feature type="chain" id="PRO_0000275746" description="Photosystem II reaction center protein H">
    <location>
        <begin position="2"/>
        <end position="73"/>
    </location>
</feature>
<feature type="transmembrane region" description="Helical" evidence="2">
    <location>
        <begin position="41"/>
        <end position="61"/>
    </location>
</feature>
<feature type="region of interest" description="Disordered" evidence="3">
    <location>
        <begin position="1"/>
        <end position="23"/>
    </location>
</feature>
<feature type="modified residue" description="Phosphothreonine" evidence="2">
    <location>
        <position position="3"/>
    </location>
</feature>
<feature type="modified residue" description="Phosphothreonine" evidence="2">
    <location>
        <position position="5"/>
    </location>
</feature>
<evidence type="ECO:0000250" key="1">
    <source>
        <dbReference type="UniProtKB" id="P56780"/>
    </source>
</evidence>
<evidence type="ECO:0000255" key="2">
    <source>
        <dbReference type="HAMAP-Rule" id="MF_00752"/>
    </source>
</evidence>
<evidence type="ECO:0000256" key="3">
    <source>
        <dbReference type="SAM" id="MobiDB-lite"/>
    </source>
</evidence>
<organism>
    <name type="scientific">Agrostis stolonifera</name>
    <name type="common">Creeping bentgrass</name>
    <dbReference type="NCBI Taxonomy" id="63632"/>
    <lineage>
        <taxon>Eukaryota</taxon>
        <taxon>Viridiplantae</taxon>
        <taxon>Streptophyta</taxon>
        <taxon>Embryophyta</taxon>
        <taxon>Tracheophyta</taxon>
        <taxon>Spermatophyta</taxon>
        <taxon>Magnoliopsida</taxon>
        <taxon>Liliopsida</taxon>
        <taxon>Poales</taxon>
        <taxon>Poaceae</taxon>
        <taxon>BOP clade</taxon>
        <taxon>Pooideae</taxon>
        <taxon>Poodae</taxon>
        <taxon>Poeae</taxon>
        <taxon>Poeae Chloroplast Group 1 (Aveneae type)</taxon>
        <taxon>Agrostidodinae</taxon>
        <taxon>Agrostidinae</taxon>
        <taxon>Agrostis</taxon>
    </lineage>
</organism>
<reference key="1">
    <citation type="journal article" date="2007" name="Theor. Appl. Genet.">
        <title>Complete chloroplast genome sequences of Hordeum vulgare, Sorghum bicolor and Agrostis stolonifera, and comparative analyses with other grass genomes.</title>
        <authorList>
            <person name="Saski C."/>
            <person name="Lee S.-B."/>
            <person name="Fjellheim S."/>
            <person name="Guda C."/>
            <person name="Jansen R.K."/>
            <person name="Luo H."/>
            <person name="Tomkins J."/>
            <person name="Rognli O.A."/>
            <person name="Daniell H."/>
            <person name="Clarke J.L."/>
        </authorList>
    </citation>
    <scope>NUCLEOTIDE SEQUENCE [LARGE SCALE GENOMIC DNA]</scope>
    <source>
        <strain>cv. Penn A-4</strain>
    </source>
</reference>
<name>PSBH_AGRST</name>